<feature type="chain" id="PRO_0000148116" description="ATP-dependent protease subunit HslV">
    <location>
        <begin position="1"/>
        <end position="180"/>
    </location>
</feature>
<feature type="active site" evidence="1">
    <location>
        <position position="8"/>
    </location>
</feature>
<feature type="binding site" evidence="1">
    <location>
        <position position="165"/>
    </location>
    <ligand>
        <name>Na(+)</name>
        <dbReference type="ChEBI" id="CHEBI:29101"/>
    </ligand>
</feature>
<feature type="binding site" evidence="1">
    <location>
        <position position="168"/>
    </location>
    <ligand>
        <name>Na(+)</name>
        <dbReference type="ChEBI" id="CHEBI:29101"/>
    </ligand>
</feature>
<feature type="binding site" evidence="1">
    <location>
        <position position="171"/>
    </location>
    <ligand>
        <name>Na(+)</name>
        <dbReference type="ChEBI" id="CHEBI:29101"/>
    </ligand>
</feature>
<accession>Q88W25</accession>
<accession>F9UPI0</accession>
<gene>
    <name evidence="1" type="primary">hslV</name>
    <name type="ordered locus">lp_1846</name>
</gene>
<comment type="function">
    <text evidence="1">Protease subunit of a proteasome-like degradation complex believed to be a general protein degrading machinery.</text>
</comment>
<comment type="catalytic activity">
    <reaction evidence="1">
        <text>ATP-dependent cleavage of peptide bonds with broad specificity.</text>
        <dbReference type="EC" id="3.4.25.2"/>
    </reaction>
</comment>
<comment type="activity regulation">
    <text evidence="1">Allosterically activated by HslU binding.</text>
</comment>
<comment type="subunit">
    <text evidence="1">A double ring-shaped homohexamer of HslV is capped on each side by a ring-shaped HslU homohexamer. The assembly of the HslU/HslV complex is dependent on binding of ATP.</text>
</comment>
<comment type="subcellular location">
    <subcellularLocation>
        <location evidence="1">Cytoplasm</location>
    </subcellularLocation>
</comment>
<comment type="similarity">
    <text evidence="1">Belongs to the peptidase T1B family. HslV subfamily.</text>
</comment>
<proteinExistence type="inferred from homology"/>
<sequence>MTTKFEATTICAVRQNGHNAMAGDGQVTMGEKVVMKGTAHKVRRIYNDQVVVGFAGSVADAFNLEDRFEKKLNEFSGNLQRAAVELAQEWRSDQALQKLEALLIVMNKDDMLLVSGSGEVITPDNDVLAIGSGGNFALAAARAMQLHAKDMSAKEVAEAAIHIAGDIDIFTNHNVISETL</sequence>
<organism>
    <name type="scientific">Lactiplantibacillus plantarum (strain ATCC BAA-793 / NCIMB 8826 / WCFS1)</name>
    <name type="common">Lactobacillus plantarum</name>
    <dbReference type="NCBI Taxonomy" id="220668"/>
    <lineage>
        <taxon>Bacteria</taxon>
        <taxon>Bacillati</taxon>
        <taxon>Bacillota</taxon>
        <taxon>Bacilli</taxon>
        <taxon>Lactobacillales</taxon>
        <taxon>Lactobacillaceae</taxon>
        <taxon>Lactiplantibacillus</taxon>
    </lineage>
</organism>
<evidence type="ECO:0000255" key="1">
    <source>
        <dbReference type="HAMAP-Rule" id="MF_00248"/>
    </source>
</evidence>
<dbReference type="EC" id="3.4.25.2" evidence="1"/>
<dbReference type="EMBL" id="AL935263">
    <property type="protein sequence ID" value="CCC79119.1"/>
    <property type="molecule type" value="Genomic_DNA"/>
</dbReference>
<dbReference type="RefSeq" id="WP_003638820.1">
    <property type="nucleotide sequence ID" value="NC_004567.2"/>
</dbReference>
<dbReference type="RefSeq" id="YP_004889633.1">
    <property type="nucleotide sequence ID" value="NC_004567.2"/>
</dbReference>
<dbReference type="SMR" id="Q88W25"/>
<dbReference type="STRING" id="220668.lp_1846"/>
<dbReference type="MEROPS" id="T01.007"/>
<dbReference type="EnsemblBacteria" id="CCC79119">
    <property type="protein sequence ID" value="CCC79119"/>
    <property type="gene ID" value="lp_1846"/>
</dbReference>
<dbReference type="GeneID" id="89669180"/>
<dbReference type="KEGG" id="lpl:lp_1846"/>
<dbReference type="PATRIC" id="fig|220668.9.peg.1556"/>
<dbReference type="eggNOG" id="COG5405">
    <property type="taxonomic scope" value="Bacteria"/>
</dbReference>
<dbReference type="HOGENOM" id="CLU_093872_1_1_9"/>
<dbReference type="OrthoDB" id="9804884at2"/>
<dbReference type="PhylomeDB" id="Q88W25"/>
<dbReference type="Proteomes" id="UP000000432">
    <property type="component" value="Chromosome"/>
</dbReference>
<dbReference type="GO" id="GO:0009376">
    <property type="term" value="C:HslUV protease complex"/>
    <property type="evidence" value="ECO:0007669"/>
    <property type="project" value="UniProtKB-UniRule"/>
</dbReference>
<dbReference type="GO" id="GO:0005839">
    <property type="term" value="C:proteasome core complex"/>
    <property type="evidence" value="ECO:0007669"/>
    <property type="project" value="InterPro"/>
</dbReference>
<dbReference type="GO" id="GO:0046872">
    <property type="term" value="F:metal ion binding"/>
    <property type="evidence" value="ECO:0007669"/>
    <property type="project" value="UniProtKB-KW"/>
</dbReference>
<dbReference type="GO" id="GO:0004298">
    <property type="term" value="F:threonine-type endopeptidase activity"/>
    <property type="evidence" value="ECO:0007669"/>
    <property type="project" value="UniProtKB-KW"/>
</dbReference>
<dbReference type="GO" id="GO:0051603">
    <property type="term" value="P:proteolysis involved in protein catabolic process"/>
    <property type="evidence" value="ECO:0007669"/>
    <property type="project" value="InterPro"/>
</dbReference>
<dbReference type="CDD" id="cd01913">
    <property type="entry name" value="protease_HslV"/>
    <property type="match status" value="1"/>
</dbReference>
<dbReference type="Gene3D" id="3.60.20.10">
    <property type="entry name" value="Glutamine Phosphoribosylpyrophosphate, subunit 1, domain 1"/>
    <property type="match status" value="1"/>
</dbReference>
<dbReference type="HAMAP" id="MF_00248">
    <property type="entry name" value="HslV"/>
    <property type="match status" value="1"/>
</dbReference>
<dbReference type="InterPro" id="IPR022281">
    <property type="entry name" value="ATP-dep_Prtase_HsIV_su"/>
</dbReference>
<dbReference type="InterPro" id="IPR029055">
    <property type="entry name" value="Ntn_hydrolases_N"/>
</dbReference>
<dbReference type="InterPro" id="IPR001353">
    <property type="entry name" value="Proteasome_sua/b"/>
</dbReference>
<dbReference type="InterPro" id="IPR023333">
    <property type="entry name" value="Proteasome_suB-type"/>
</dbReference>
<dbReference type="NCBIfam" id="TIGR03692">
    <property type="entry name" value="ATP_dep_HslV"/>
    <property type="match status" value="1"/>
</dbReference>
<dbReference type="NCBIfam" id="NF003964">
    <property type="entry name" value="PRK05456.1"/>
    <property type="match status" value="1"/>
</dbReference>
<dbReference type="PANTHER" id="PTHR32194:SF0">
    <property type="entry name" value="ATP-DEPENDENT PROTEASE SUBUNIT HSLV"/>
    <property type="match status" value="1"/>
</dbReference>
<dbReference type="PANTHER" id="PTHR32194">
    <property type="entry name" value="METALLOPROTEASE TLDD"/>
    <property type="match status" value="1"/>
</dbReference>
<dbReference type="Pfam" id="PF00227">
    <property type="entry name" value="Proteasome"/>
    <property type="match status" value="1"/>
</dbReference>
<dbReference type="SUPFAM" id="SSF56235">
    <property type="entry name" value="N-terminal nucleophile aminohydrolases (Ntn hydrolases)"/>
    <property type="match status" value="1"/>
</dbReference>
<dbReference type="PROSITE" id="PS51476">
    <property type="entry name" value="PROTEASOME_BETA_2"/>
    <property type="match status" value="1"/>
</dbReference>
<reference key="1">
    <citation type="journal article" date="2003" name="Proc. Natl. Acad. Sci. U.S.A.">
        <title>Complete genome sequence of Lactobacillus plantarum WCFS1.</title>
        <authorList>
            <person name="Kleerebezem M."/>
            <person name="Boekhorst J."/>
            <person name="van Kranenburg R."/>
            <person name="Molenaar D."/>
            <person name="Kuipers O.P."/>
            <person name="Leer R."/>
            <person name="Tarchini R."/>
            <person name="Peters S.A."/>
            <person name="Sandbrink H.M."/>
            <person name="Fiers M.W.E.J."/>
            <person name="Stiekema W."/>
            <person name="Klein Lankhorst R.M."/>
            <person name="Bron P.A."/>
            <person name="Hoffer S.M."/>
            <person name="Nierop Groot M.N."/>
            <person name="Kerkhoven R."/>
            <person name="De Vries M."/>
            <person name="Ursing B."/>
            <person name="De Vos W.M."/>
            <person name="Siezen R.J."/>
        </authorList>
    </citation>
    <scope>NUCLEOTIDE SEQUENCE [LARGE SCALE GENOMIC DNA]</scope>
    <source>
        <strain>ATCC BAA-793 / NCIMB 8826 / WCFS1</strain>
    </source>
</reference>
<reference key="2">
    <citation type="journal article" date="2012" name="J. Bacteriol.">
        <title>Complete resequencing and reannotation of the Lactobacillus plantarum WCFS1 genome.</title>
        <authorList>
            <person name="Siezen R.J."/>
            <person name="Francke C."/>
            <person name="Renckens B."/>
            <person name="Boekhorst J."/>
            <person name="Wels M."/>
            <person name="Kleerebezem M."/>
            <person name="van Hijum S.A."/>
        </authorList>
    </citation>
    <scope>NUCLEOTIDE SEQUENCE [LARGE SCALE GENOMIC DNA]</scope>
    <scope>GENOME REANNOTATION</scope>
    <source>
        <strain>ATCC BAA-793 / NCIMB 8826 / WCFS1</strain>
    </source>
</reference>
<keyword id="KW-0021">Allosteric enzyme</keyword>
<keyword id="KW-0963">Cytoplasm</keyword>
<keyword id="KW-0378">Hydrolase</keyword>
<keyword id="KW-0479">Metal-binding</keyword>
<keyword id="KW-0645">Protease</keyword>
<keyword id="KW-1185">Reference proteome</keyword>
<keyword id="KW-0915">Sodium</keyword>
<keyword id="KW-0888">Threonine protease</keyword>
<name>HSLV_LACPL</name>
<protein>
    <recommendedName>
        <fullName evidence="1">ATP-dependent protease subunit HslV</fullName>
        <ecNumber evidence="1">3.4.25.2</ecNumber>
    </recommendedName>
</protein>